<organismHost>
    <name type="scientific">Ornithodoros</name>
    <name type="common">relapsing fever ticks</name>
    <dbReference type="NCBI Taxonomy" id="6937"/>
</organismHost>
<organismHost>
    <name type="scientific">Phacochoerus aethiopicus</name>
    <name type="common">Warthog</name>
    <dbReference type="NCBI Taxonomy" id="85517"/>
</organismHost>
<organismHost>
    <name type="scientific">Phacochoerus africanus</name>
    <name type="common">Warthog</name>
    <dbReference type="NCBI Taxonomy" id="41426"/>
</organismHost>
<organismHost>
    <name type="scientific">Potamochoerus larvatus</name>
    <name type="common">Bushpig</name>
    <dbReference type="NCBI Taxonomy" id="273792"/>
</organismHost>
<organismHost>
    <name type="scientific">Sus scrofa</name>
    <name type="common">Pig</name>
    <dbReference type="NCBI Taxonomy" id="9823"/>
</organismHost>
<protein>
    <recommendedName>
        <fullName>Protein MGF 360-9L</fullName>
    </recommendedName>
</protein>
<evidence type="ECO:0000250" key="1">
    <source>
        <dbReference type="UniProtKB" id="Q65137"/>
    </source>
</evidence>
<evidence type="ECO:0000305" key="2"/>
<keyword id="KW-0244">Early protein</keyword>
<keyword id="KW-1035">Host cytoplasm</keyword>
<keyword id="KW-0945">Host-virus interaction</keyword>
<keyword id="KW-1090">Inhibition of host innate immune response by virus</keyword>
<keyword id="KW-1114">Inhibition of host interferon signaling pathway by virus</keyword>
<keyword id="KW-1105">Inhibition of host STAT1 by virus</keyword>
<keyword id="KW-1106">Inhibition of host STAT2 by virus</keyword>
<keyword id="KW-0922">Interferon antiviral system evasion</keyword>
<keyword id="KW-0899">Viral immunoevasion</keyword>
<comment type="function">
    <text evidence="1">Plays a role in virus cell tropism, and may be required for efficient virus replication in macrophages.</text>
</comment>
<comment type="subunit">
    <text evidence="1">Interacts with host STAT1; this interaction mediates STAT1 degradation through apoptosis. Interacts with host STAT2; this interaction mediates STAT2 degradation through the proteasome.</text>
</comment>
<comment type="subcellular location">
    <subcellularLocation>
        <location evidence="1">Host cytoplasm</location>
    </subcellularLocation>
</comment>
<comment type="induction">
    <text evidence="2">Expressed in the early phase of the viral replicative cycle.</text>
</comment>
<comment type="similarity">
    <text evidence="2">Belongs to the asfivirus MGF 360 family.</text>
</comment>
<organism>
    <name type="scientific">African swine fever virus (isolate Warthog/Namibia/Wart80/1980)</name>
    <name type="common">ASFV</name>
    <dbReference type="NCBI Taxonomy" id="561444"/>
    <lineage>
        <taxon>Viruses</taxon>
        <taxon>Varidnaviria</taxon>
        <taxon>Bamfordvirae</taxon>
        <taxon>Nucleocytoviricota</taxon>
        <taxon>Pokkesviricetes</taxon>
        <taxon>Asfuvirales</taxon>
        <taxon>Asfarviridae</taxon>
        <taxon>Asfivirus</taxon>
        <taxon>African swine fever virus</taxon>
    </lineage>
</organism>
<accession>P0C9P0</accession>
<proteinExistence type="inferred from homology"/>
<name>3609L_ASFWA</name>
<dbReference type="EMBL" id="AY261366">
    <property type="status" value="NOT_ANNOTATED_CDS"/>
    <property type="molecule type" value="Genomic_DNA"/>
</dbReference>
<dbReference type="SMR" id="P0C9P0"/>
<dbReference type="Proteomes" id="UP000000858">
    <property type="component" value="Segment"/>
</dbReference>
<dbReference type="GO" id="GO:0030430">
    <property type="term" value="C:host cell cytoplasm"/>
    <property type="evidence" value="ECO:0007669"/>
    <property type="project" value="UniProtKB-SubCell"/>
</dbReference>
<dbReference type="GO" id="GO:0052170">
    <property type="term" value="P:symbiont-mediated suppression of host innate immune response"/>
    <property type="evidence" value="ECO:0007669"/>
    <property type="project" value="UniProtKB-KW"/>
</dbReference>
<dbReference type="GO" id="GO:0039563">
    <property type="term" value="P:symbiont-mediated suppression of host JAK-STAT cascade via inhibition of STAT1 activity"/>
    <property type="evidence" value="ECO:0007669"/>
    <property type="project" value="UniProtKB-KW"/>
</dbReference>
<dbReference type="GO" id="GO:0039564">
    <property type="term" value="P:symbiont-mediated suppression of host JAK-STAT cascade via inhibition of STAT2 activity"/>
    <property type="evidence" value="ECO:0007669"/>
    <property type="project" value="UniProtKB-KW"/>
</dbReference>
<dbReference type="GO" id="GO:0039502">
    <property type="term" value="P:symbiont-mediated suppression of host type I interferon-mediated signaling pathway"/>
    <property type="evidence" value="ECO:0007669"/>
    <property type="project" value="UniProtKB-KW"/>
</dbReference>
<dbReference type="GO" id="GO:0042330">
    <property type="term" value="P:taxis"/>
    <property type="evidence" value="ECO:0007669"/>
    <property type="project" value="InterPro"/>
</dbReference>
<dbReference type="InterPro" id="IPR002595">
    <property type="entry name" value="ASFV_MGF360"/>
</dbReference>
<dbReference type="Pfam" id="PF01671">
    <property type="entry name" value="ASFV_360"/>
    <property type="match status" value="1"/>
</dbReference>
<gene>
    <name type="ordered locus">War-029</name>
</gene>
<feature type="chain" id="PRO_0000373268" description="Protein MGF 360-9L">
    <location>
        <begin position="1"/>
        <end position="352"/>
    </location>
</feature>
<reference key="1">
    <citation type="submission" date="2003-03" db="EMBL/GenBank/DDBJ databases">
        <title>African swine fever virus genomes.</title>
        <authorList>
            <person name="Kutish G.F."/>
            <person name="Rock D.L."/>
        </authorList>
    </citation>
    <scope>NUCLEOTIDE SEQUENCE [LARGE SCALE GENOMIC DNA]</scope>
</reference>
<sequence>MVLSLQTLAKKVLAGQRPTKCHPHFLKCYGLWWHNGPMIFDQNQKKIWSPIFTDGVHINAALVKAVAENNYDLIKLFTEWGANIDYSLLSVNTERTRDLCRELGAKEQLKQEEVLYYFNIIKRNLTSSNIILCHEVFSHNPILETINRTKLRGIIYEQLEALMENTDILSELLTKYWYGIAIEFNLTKAIHYFYQRYVHLHQWRLMYALFYNNVCDLHELYAKEKIRMDMDEMLKWACRKNYNYLTIYYCCIVLGADINQAMFHSIQFYNIGNMFFCIDLGANAIEEGKTLALQKDKSFIASLLSINCYSMNDSLSLKETDPEVIKRMLKDYHSKNMSIAHKYYIKHGFNDI</sequence>